<comment type="function">
    <text evidence="1">Produces ATP from ADP in the presence of a proton gradient across the membrane.</text>
</comment>
<comment type="subunit">
    <text>F-type ATPases have 2 components, CF(1) - the catalytic core - and CF(0) - the membrane proton channel. CF(1) has five subunits: alpha(3), beta(3), gamma(1), delta(1), epsilon(1). CF(0) has three main subunits: a, b and c.</text>
</comment>
<comment type="subcellular location">
    <subcellularLocation>
        <location evidence="1">Cell inner membrane</location>
        <topology evidence="1">Peripheral membrane protein</topology>
    </subcellularLocation>
</comment>
<comment type="similarity">
    <text evidence="1">Belongs to the ATPase epsilon chain family.</text>
</comment>
<comment type="sequence caution" evidence="2">
    <conflict type="erroneous initiation">
        <sequence resource="EMBL-CDS" id="ABE37798"/>
    </conflict>
</comment>
<feature type="chain" id="PRO_0000265877" description="ATP synthase epsilon chain">
    <location>
        <begin position="1"/>
        <end position="135"/>
    </location>
</feature>
<protein>
    <recommendedName>
        <fullName evidence="1">ATP synthase epsilon chain</fullName>
    </recommendedName>
    <alternativeName>
        <fullName evidence="1">ATP synthase F1 sector epsilon subunit</fullName>
    </alternativeName>
    <alternativeName>
        <fullName evidence="1">F-ATPase epsilon subunit</fullName>
    </alternativeName>
</protein>
<evidence type="ECO:0000255" key="1">
    <source>
        <dbReference type="HAMAP-Rule" id="MF_00530"/>
    </source>
</evidence>
<evidence type="ECO:0000305" key="2"/>
<reference key="1">
    <citation type="submission" date="2006-03" db="EMBL/GenBank/DDBJ databases">
        <title>Complete sequence of Rhodopseudomonas palustris BisB5.</title>
        <authorList>
            <consortium name="US DOE Joint Genome Institute"/>
            <person name="Copeland A."/>
            <person name="Lucas S."/>
            <person name="Lapidus A."/>
            <person name="Barry K."/>
            <person name="Detter J.C."/>
            <person name="Glavina del Rio T."/>
            <person name="Hammon N."/>
            <person name="Israni S."/>
            <person name="Dalin E."/>
            <person name="Tice H."/>
            <person name="Pitluck S."/>
            <person name="Chain P."/>
            <person name="Malfatti S."/>
            <person name="Shin M."/>
            <person name="Vergez L."/>
            <person name="Schmutz J."/>
            <person name="Larimer F."/>
            <person name="Land M."/>
            <person name="Hauser L."/>
            <person name="Pelletier D.A."/>
            <person name="Kyrpides N."/>
            <person name="Lykidis A."/>
            <person name="Oda Y."/>
            <person name="Harwood C.S."/>
            <person name="Richardson P."/>
        </authorList>
    </citation>
    <scope>NUCLEOTIDE SEQUENCE [LARGE SCALE GENOMIC DNA]</scope>
    <source>
        <strain>BisB5</strain>
    </source>
</reference>
<name>ATPE_RHOPS</name>
<keyword id="KW-0066">ATP synthesis</keyword>
<keyword id="KW-0997">Cell inner membrane</keyword>
<keyword id="KW-1003">Cell membrane</keyword>
<keyword id="KW-0139">CF(1)</keyword>
<keyword id="KW-0375">Hydrogen ion transport</keyword>
<keyword id="KW-0406">Ion transport</keyword>
<keyword id="KW-0472">Membrane</keyword>
<keyword id="KW-0813">Transport</keyword>
<organism>
    <name type="scientific">Rhodopseudomonas palustris (strain BisB5)</name>
    <dbReference type="NCBI Taxonomy" id="316057"/>
    <lineage>
        <taxon>Bacteria</taxon>
        <taxon>Pseudomonadati</taxon>
        <taxon>Pseudomonadota</taxon>
        <taxon>Alphaproteobacteria</taxon>
        <taxon>Hyphomicrobiales</taxon>
        <taxon>Nitrobacteraceae</taxon>
        <taxon>Rhodopseudomonas</taxon>
    </lineage>
</organism>
<sequence length="135" mass="14135">MATFHFDLVSPEQVAFSGEVDQVDIPGAEGDFGVLAGHAPVVAVIRPGILTVTAGGAQQKIVVLGGIAEVSEKGLTVLADVATAVADLDMQDFAATIATMEQQLPGKVGDVLDRSIERLDHYKSIQHQISTTAMH</sequence>
<proteinExistence type="inferred from homology"/>
<accession>Q13DP1</accession>
<gene>
    <name evidence="1" type="primary">atpC</name>
    <name type="ordered locus">RPD_0560</name>
</gene>
<dbReference type="EMBL" id="CP000283">
    <property type="protein sequence ID" value="ABE37798.1"/>
    <property type="status" value="ALT_INIT"/>
    <property type="molecule type" value="Genomic_DNA"/>
</dbReference>
<dbReference type="SMR" id="Q13DP1"/>
<dbReference type="STRING" id="316057.RPD_0560"/>
<dbReference type="KEGG" id="rpd:RPD_0560"/>
<dbReference type="eggNOG" id="COG0355">
    <property type="taxonomic scope" value="Bacteria"/>
</dbReference>
<dbReference type="HOGENOM" id="CLU_084338_2_1_5"/>
<dbReference type="BioCyc" id="RPAL316057:RPD_RS02875-MONOMER"/>
<dbReference type="Proteomes" id="UP000001818">
    <property type="component" value="Chromosome"/>
</dbReference>
<dbReference type="GO" id="GO:0005886">
    <property type="term" value="C:plasma membrane"/>
    <property type="evidence" value="ECO:0007669"/>
    <property type="project" value="UniProtKB-SubCell"/>
</dbReference>
<dbReference type="GO" id="GO:0045259">
    <property type="term" value="C:proton-transporting ATP synthase complex"/>
    <property type="evidence" value="ECO:0007669"/>
    <property type="project" value="UniProtKB-KW"/>
</dbReference>
<dbReference type="GO" id="GO:0005524">
    <property type="term" value="F:ATP binding"/>
    <property type="evidence" value="ECO:0007669"/>
    <property type="project" value="UniProtKB-UniRule"/>
</dbReference>
<dbReference type="GO" id="GO:0046933">
    <property type="term" value="F:proton-transporting ATP synthase activity, rotational mechanism"/>
    <property type="evidence" value="ECO:0007669"/>
    <property type="project" value="UniProtKB-UniRule"/>
</dbReference>
<dbReference type="CDD" id="cd12152">
    <property type="entry name" value="F1-ATPase_delta"/>
    <property type="match status" value="1"/>
</dbReference>
<dbReference type="Gene3D" id="2.60.15.10">
    <property type="entry name" value="F0F1 ATP synthase delta/epsilon subunit, N-terminal"/>
    <property type="match status" value="1"/>
</dbReference>
<dbReference type="HAMAP" id="MF_00530">
    <property type="entry name" value="ATP_synth_epsil_bac"/>
    <property type="match status" value="1"/>
</dbReference>
<dbReference type="InterPro" id="IPR001469">
    <property type="entry name" value="ATP_synth_F1_dsu/esu"/>
</dbReference>
<dbReference type="InterPro" id="IPR020546">
    <property type="entry name" value="ATP_synth_F1_dsu/esu_N"/>
</dbReference>
<dbReference type="InterPro" id="IPR036771">
    <property type="entry name" value="ATPsynth_dsu/esu_N"/>
</dbReference>
<dbReference type="NCBIfam" id="TIGR01216">
    <property type="entry name" value="ATP_synt_epsi"/>
    <property type="match status" value="1"/>
</dbReference>
<dbReference type="NCBIfam" id="NF009982">
    <property type="entry name" value="PRK13448.1"/>
    <property type="match status" value="1"/>
</dbReference>
<dbReference type="PANTHER" id="PTHR13822">
    <property type="entry name" value="ATP SYNTHASE DELTA/EPSILON CHAIN"/>
    <property type="match status" value="1"/>
</dbReference>
<dbReference type="PANTHER" id="PTHR13822:SF10">
    <property type="entry name" value="ATP SYNTHASE EPSILON CHAIN, CHLOROPLASTIC"/>
    <property type="match status" value="1"/>
</dbReference>
<dbReference type="Pfam" id="PF02823">
    <property type="entry name" value="ATP-synt_DE_N"/>
    <property type="match status" value="1"/>
</dbReference>
<dbReference type="SUPFAM" id="SSF51344">
    <property type="entry name" value="Epsilon subunit of F1F0-ATP synthase N-terminal domain"/>
    <property type="match status" value="1"/>
</dbReference>